<dbReference type="EC" id="3.2.2.-" evidence="1"/>
<dbReference type="EC" id="4.2.99.18" evidence="1"/>
<dbReference type="EMBL" id="CU928145">
    <property type="protein sequence ID" value="CAU96567.1"/>
    <property type="molecule type" value="Genomic_DNA"/>
</dbReference>
<dbReference type="RefSeq" id="WP_001114035.1">
    <property type="nucleotide sequence ID" value="NC_011748.1"/>
</dbReference>
<dbReference type="SMR" id="B7LAC0"/>
<dbReference type="KEGG" id="eck:EC55989_0697"/>
<dbReference type="HOGENOM" id="CLU_038423_2_2_6"/>
<dbReference type="Proteomes" id="UP000000746">
    <property type="component" value="Chromosome"/>
</dbReference>
<dbReference type="GO" id="GO:0140078">
    <property type="term" value="F:class I DNA-(apurinic or apyrimidinic site) endonuclease activity"/>
    <property type="evidence" value="ECO:0007669"/>
    <property type="project" value="UniProtKB-EC"/>
</dbReference>
<dbReference type="GO" id="GO:0003684">
    <property type="term" value="F:damaged DNA binding"/>
    <property type="evidence" value="ECO:0007669"/>
    <property type="project" value="InterPro"/>
</dbReference>
<dbReference type="GO" id="GO:0000703">
    <property type="term" value="F:oxidized pyrimidine nucleobase lesion DNA N-glycosylase activity"/>
    <property type="evidence" value="ECO:0007669"/>
    <property type="project" value="UniProtKB-UniRule"/>
</dbReference>
<dbReference type="GO" id="GO:0008270">
    <property type="term" value="F:zinc ion binding"/>
    <property type="evidence" value="ECO:0007669"/>
    <property type="project" value="UniProtKB-UniRule"/>
</dbReference>
<dbReference type="GO" id="GO:0006284">
    <property type="term" value="P:base-excision repair"/>
    <property type="evidence" value="ECO:0007669"/>
    <property type="project" value="InterPro"/>
</dbReference>
<dbReference type="CDD" id="cd08965">
    <property type="entry name" value="EcNei-like_N"/>
    <property type="match status" value="1"/>
</dbReference>
<dbReference type="FunFam" id="1.10.8.50:FF:000005">
    <property type="entry name" value="Endonuclease 8"/>
    <property type="match status" value="1"/>
</dbReference>
<dbReference type="FunFam" id="3.20.190.10:FF:000002">
    <property type="entry name" value="Endonuclease 8"/>
    <property type="match status" value="1"/>
</dbReference>
<dbReference type="Gene3D" id="1.10.8.50">
    <property type="match status" value="1"/>
</dbReference>
<dbReference type="Gene3D" id="3.20.190.10">
    <property type="entry name" value="MutM-like, N-terminal"/>
    <property type="match status" value="1"/>
</dbReference>
<dbReference type="HAMAP" id="MF_01253">
    <property type="entry name" value="Endonuclease_8"/>
    <property type="match status" value="1"/>
</dbReference>
<dbReference type="InterPro" id="IPR015886">
    <property type="entry name" value="DNA_glyclase/AP_lyase_DNA-bd"/>
</dbReference>
<dbReference type="InterPro" id="IPR015887">
    <property type="entry name" value="DNA_glyclase_Znf_dom_DNA_BS"/>
</dbReference>
<dbReference type="InterPro" id="IPR044091">
    <property type="entry name" value="EcNei-like_N"/>
</dbReference>
<dbReference type="InterPro" id="IPR023713">
    <property type="entry name" value="Endonuclease-VIII"/>
</dbReference>
<dbReference type="InterPro" id="IPR012319">
    <property type="entry name" value="FPG_cat"/>
</dbReference>
<dbReference type="InterPro" id="IPR035937">
    <property type="entry name" value="MutM-like_N-ter"/>
</dbReference>
<dbReference type="InterPro" id="IPR010979">
    <property type="entry name" value="Ribosomal_uS13-like_H2TH"/>
</dbReference>
<dbReference type="InterPro" id="IPR000214">
    <property type="entry name" value="Znf_DNA_glyclase/AP_lyase"/>
</dbReference>
<dbReference type="InterPro" id="IPR010663">
    <property type="entry name" value="Znf_FPG/IleRS"/>
</dbReference>
<dbReference type="NCBIfam" id="NF007763">
    <property type="entry name" value="PRK10445.1"/>
    <property type="match status" value="1"/>
</dbReference>
<dbReference type="PANTHER" id="PTHR42697">
    <property type="entry name" value="ENDONUCLEASE 8"/>
    <property type="match status" value="1"/>
</dbReference>
<dbReference type="PANTHER" id="PTHR42697:SF1">
    <property type="entry name" value="ENDONUCLEASE 8"/>
    <property type="match status" value="1"/>
</dbReference>
<dbReference type="Pfam" id="PF01149">
    <property type="entry name" value="Fapy_DNA_glyco"/>
    <property type="match status" value="1"/>
</dbReference>
<dbReference type="Pfam" id="PF06831">
    <property type="entry name" value="H2TH"/>
    <property type="match status" value="1"/>
</dbReference>
<dbReference type="Pfam" id="PF06827">
    <property type="entry name" value="zf-FPG_IleRS"/>
    <property type="match status" value="1"/>
</dbReference>
<dbReference type="SMART" id="SM00898">
    <property type="entry name" value="Fapy_DNA_glyco"/>
    <property type="match status" value="1"/>
</dbReference>
<dbReference type="SMART" id="SM01232">
    <property type="entry name" value="H2TH"/>
    <property type="match status" value="1"/>
</dbReference>
<dbReference type="SUPFAM" id="SSF57716">
    <property type="entry name" value="Glucocorticoid receptor-like (DNA-binding domain)"/>
    <property type="match status" value="1"/>
</dbReference>
<dbReference type="SUPFAM" id="SSF81624">
    <property type="entry name" value="N-terminal domain of MutM-like DNA repair proteins"/>
    <property type="match status" value="1"/>
</dbReference>
<dbReference type="SUPFAM" id="SSF46946">
    <property type="entry name" value="S13-like H2TH domain"/>
    <property type="match status" value="1"/>
</dbReference>
<dbReference type="PROSITE" id="PS51068">
    <property type="entry name" value="FPG_CAT"/>
    <property type="match status" value="1"/>
</dbReference>
<dbReference type="PROSITE" id="PS01242">
    <property type="entry name" value="ZF_FPG_1"/>
    <property type="match status" value="1"/>
</dbReference>
<dbReference type="PROSITE" id="PS51066">
    <property type="entry name" value="ZF_FPG_2"/>
    <property type="match status" value="1"/>
</dbReference>
<protein>
    <recommendedName>
        <fullName evidence="1">Endonuclease 8</fullName>
    </recommendedName>
    <alternativeName>
        <fullName evidence="1">DNA glycosylase/AP lyase Nei</fullName>
        <ecNumber evidence="1">3.2.2.-</ecNumber>
        <ecNumber evidence="1">4.2.99.18</ecNumber>
    </alternativeName>
    <alternativeName>
        <fullName evidence="1">DNA-(apurinic or apyrimidinic site) lyase Nei</fullName>
    </alternativeName>
    <alternativeName>
        <fullName evidence="1">Endonuclease VIII</fullName>
    </alternativeName>
</protein>
<feature type="initiator methionine" description="Removed" evidence="1">
    <location>
        <position position="1"/>
    </location>
</feature>
<feature type="chain" id="PRO_1000165090" description="Endonuclease 8">
    <location>
        <begin position="2"/>
        <end position="263"/>
    </location>
</feature>
<feature type="zinc finger region" description="FPG-type" evidence="1">
    <location>
        <begin position="229"/>
        <end position="263"/>
    </location>
</feature>
<feature type="active site" description="Schiff-base intermediate with DNA" evidence="1">
    <location>
        <position position="2"/>
    </location>
</feature>
<feature type="active site" description="Proton donor" evidence="1">
    <location>
        <position position="3"/>
    </location>
</feature>
<feature type="active site" description="Proton donor; for beta-elimination activity" evidence="1">
    <location>
        <position position="53"/>
    </location>
</feature>
<feature type="active site" description="Proton donor; for delta-elimination activity" evidence="1">
    <location>
        <position position="253"/>
    </location>
</feature>
<feature type="binding site" evidence="1">
    <location>
        <position position="70"/>
    </location>
    <ligand>
        <name>DNA</name>
        <dbReference type="ChEBI" id="CHEBI:16991"/>
    </ligand>
</feature>
<feature type="binding site" evidence="1">
    <location>
        <position position="125"/>
    </location>
    <ligand>
        <name>DNA</name>
        <dbReference type="ChEBI" id="CHEBI:16991"/>
    </ligand>
</feature>
<feature type="binding site" evidence="1">
    <location>
        <position position="169"/>
    </location>
    <ligand>
        <name>DNA</name>
        <dbReference type="ChEBI" id="CHEBI:16991"/>
    </ligand>
</feature>
<sequence>MPEGPEIRRAADNLEAAIKGKPLTDVWFAFPQLKTYQSQLIGQHVTHVETRGKALLTHFSNDLTLYSHNQLYGVWRVVDTSEEPQTTRVLRVKLQTADKTILLYSASDIEMLRPEQLTTHPFLQRVGPDVLDPNLTPEVVKERLLSPRFRNRQFAGLLLDQAFLAGLGNYLRVEILWQVGLTGNHKAKDLNAAQLDALAHALLEIPRFSYATRGQVDENKHHGALFRFKVFHRDGELCERCGGIIEKTTLSSRPFYWCPGCQH</sequence>
<gene>
    <name evidence="1" type="primary">nei</name>
    <name type="ordered locus">EC55989_0697</name>
</gene>
<evidence type="ECO:0000255" key="1">
    <source>
        <dbReference type="HAMAP-Rule" id="MF_01253"/>
    </source>
</evidence>
<comment type="function">
    <text evidence="1">Involved in base excision repair of DNA damaged by oxidation or by mutagenic agents. Acts as a DNA glycosylase that recognizes and removes damaged bases. Has a preference for oxidized pyrimidines, such as thymine glycol, 5,6-dihydrouracil and 5,6-dihydrothymine. Has AP (apurinic/apyrimidinic) lyase activity and introduces nicks in the DNA strand. Cleaves the DNA backbone by beta-delta elimination to generate a single-strand break at the site of the removed base with both 3'- and 5'-phosphates.</text>
</comment>
<comment type="catalytic activity">
    <reaction evidence="1">
        <text>2'-deoxyribonucleotide-(2'-deoxyribose 5'-phosphate)-2'-deoxyribonucleotide-DNA = a 3'-end 2'-deoxyribonucleotide-(2,3-dehydro-2,3-deoxyribose 5'-phosphate)-DNA + a 5'-end 5'-phospho-2'-deoxyribonucleoside-DNA + H(+)</text>
        <dbReference type="Rhea" id="RHEA:66592"/>
        <dbReference type="Rhea" id="RHEA-COMP:13180"/>
        <dbReference type="Rhea" id="RHEA-COMP:16897"/>
        <dbReference type="Rhea" id="RHEA-COMP:17067"/>
        <dbReference type="ChEBI" id="CHEBI:15378"/>
        <dbReference type="ChEBI" id="CHEBI:136412"/>
        <dbReference type="ChEBI" id="CHEBI:157695"/>
        <dbReference type="ChEBI" id="CHEBI:167181"/>
        <dbReference type="EC" id="4.2.99.18"/>
    </reaction>
</comment>
<comment type="cofactor">
    <cofactor evidence="1">
        <name>Zn(2+)</name>
        <dbReference type="ChEBI" id="CHEBI:29105"/>
    </cofactor>
    <text evidence="1">Binds 1 zinc ion per subunit.</text>
</comment>
<comment type="similarity">
    <text evidence="1">Belongs to the FPG family.</text>
</comment>
<accession>B7LAC0</accession>
<keyword id="KW-0227">DNA damage</keyword>
<keyword id="KW-0234">DNA repair</keyword>
<keyword id="KW-0238">DNA-binding</keyword>
<keyword id="KW-0326">Glycosidase</keyword>
<keyword id="KW-0378">Hydrolase</keyword>
<keyword id="KW-0456">Lyase</keyword>
<keyword id="KW-0479">Metal-binding</keyword>
<keyword id="KW-0511">Multifunctional enzyme</keyword>
<keyword id="KW-1185">Reference proteome</keyword>
<keyword id="KW-0862">Zinc</keyword>
<keyword id="KW-0863">Zinc-finger</keyword>
<proteinExistence type="inferred from homology"/>
<reference key="1">
    <citation type="journal article" date="2009" name="PLoS Genet.">
        <title>Organised genome dynamics in the Escherichia coli species results in highly diverse adaptive paths.</title>
        <authorList>
            <person name="Touchon M."/>
            <person name="Hoede C."/>
            <person name="Tenaillon O."/>
            <person name="Barbe V."/>
            <person name="Baeriswyl S."/>
            <person name="Bidet P."/>
            <person name="Bingen E."/>
            <person name="Bonacorsi S."/>
            <person name="Bouchier C."/>
            <person name="Bouvet O."/>
            <person name="Calteau A."/>
            <person name="Chiapello H."/>
            <person name="Clermont O."/>
            <person name="Cruveiller S."/>
            <person name="Danchin A."/>
            <person name="Diard M."/>
            <person name="Dossat C."/>
            <person name="Karoui M.E."/>
            <person name="Frapy E."/>
            <person name="Garry L."/>
            <person name="Ghigo J.M."/>
            <person name="Gilles A.M."/>
            <person name="Johnson J."/>
            <person name="Le Bouguenec C."/>
            <person name="Lescat M."/>
            <person name="Mangenot S."/>
            <person name="Martinez-Jehanne V."/>
            <person name="Matic I."/>
            <person name="Nassif X."/>
            <person name="Oztas S."/>
            <person name="Petit M.A."/>
            <person name="Pichon C."/>
            <person name="Rouy Z."/>
            <person name="Ruf C.S."/>
            <person name="Schneider D."/>
            <person name="Tourret J."/>
            <person name="Vacherie B."/>
            <person name="Vallenet D."/>
            <person name="Medigue C."/>
            <person name="Rocha E.P.C."/>
            <person name="Denamur E."/>
        </authorList>
    </citation>
    <scope>NUCLEOTIDE SEQUENCE [LARGE SCALE GENOMIC DNA]</scope>
    <source>
        <strain>55989 / EAEC</strain>
    </source>
</reference>
<name>END8_ECO55</name>
<organism>
    <name type="scientific">Escherichia coli (strain 55989 / EAEC)</name>
    <dbReference type="NCBI Taxonomy" id="585055"/>
    <lineage>
        <taxon>Bacteria</taxon>
        <taxon>Pseudomonadati</taxon>
        <taxon>Pseudomonadota</taxon>
        <taxon>Gammaproteobacteria</taxon>
        <taxon>Enterobacterales</taxon>
        <taxon>Enterobacteriaceae</taxon>
        <taxon>Escherichia</taxon>
    </lineage>
</organism>